<gene>
    <name evidence="1" type="primary">LIA1</name>
    <name type="ordered locus">CNL05340</name>
</gene>
<comment type="function">
    <text evidence="1">Catalyzes the hydroxylation of the N(6)-(4-aminobutyl)-L-lysine intermediate to form hypusine, an essential post-translational modification only found in mature eIF-5A factor.</text>
</comment>
<comment type="catalytic activity">
    <reaction evidence="1">
        <text>[eIF5A protein]-deoxyhypusine + AH2 + O2 = [eIF5A protein]-hypusine + A + H2O</text>
        <dbReference type="Rhea" id="RHEA:14101"/>
        <dbReference type="Rhea" id="RHEA-COMP:10144"/>
        <dbReference type="Rhea" id="RHEA-COMP:12592"/>
        <dbReference type="ChEBI" id="CHEBI:13193"/>
        <dbReference type="ChEBI" id="CHEBI:15377"/>
        <dbReference type="ChEBI" id="CHEBI:15379"/>
        <dbReference type="ChEBI" id="CHEBI:17499"/>
        <dbReference type="ChEBI" id="CHEBI:82657"/>
        <dbReference type="ChEBI" id="CHEBI:91175"/>
        <dbReference type="EC" id="1.14.99.29"/>
    </reaction>
</comment>
<comment type="cofactor">
    <cofactor evidence="1">
        <name>Fe(2+)</name>
        <dbReference type="ChEBI" id="CHEBI:29033"/>
    </cofactor>
    <text evidence="1">Binds 2 Fe(2+) ions per subunit.</text>
</comment>
<comment type="pathway">
    <text evidence="1">Protein modification; eIF5A hypusination.</text>
</comment>
<comment type="subcellular location">
    <subcellularLocation>
        <location evidence="1">Cytoplasm</location>
    </subcellularLocation>
    <subcellularLocation>
        <location evidence="1">Nucleus</location>
    </subcellularLocation>
</comment>
<comment type="similarity">
    <text evidence="1">Belongs to the deoxyhypusine hydroxylase family.</text>
</comment>
<proteinExistence type="inferred from homology"/>
<evidence type="ECO:0000255" key="1">
    <source>
        <dbReference type="HAMAP-Rule" id="MF_03101"/>
    </source>
</evidence>
<organism>
    <name type="scientific">Cryptococcus neoformans var. neoformans serotype D (strain JEC21 / ATCC MYA-565)</name>
    <name type="common">Filobasidiella neoformans</name>
    <dbReference type="NCBI Taxonomy" id="214684"/>
    <lineage>
        <taxon>Eukaryota</taxon>
        <taxon>Fungi</taxon>
        <taxon>Dikarya</taxon>
        <taxon>Basidiomycota</taxon>
        <taxon>Agaricomycotina</taxon>
        <taxon>Tremellomycetes</taxon>
        <taxon>Tremellales</taxon>
        <taxon>Cryptococcaceae</taxon>
        <taxon>Cryptococcus</taxon>
        <taxon>Cryptococcus neoformans species complex</taxon>
    </lineage>
</organism>
<protein>
    <recommendedName>
        <fullName evidence="1">Deoxyhypusine hydroxylase</fullName>
        <shortName evidence="1">DOHH</shortName>
        <ecNumber evidence="1">1.14.99.29</ecNumber>
    </recommendedName>
    <alternativeName>
        <fullName evidence="1">Deoxyhypusine dioxygenase</fullName>
    </alternativeName>
    <alternativeName>
        <fullName evidence="1">Deoxyhypusine monooxygenase</fullName>
    </alternativeName>
</protein>
<reference key="1">
    <citation type="journal article" date="2005" name="Science">
        <title>The genome of the basidiomycetous yeast and human pathogen Cryptococcus neoformans.</title>
        <authorList>
            <person name="Loftus B.J."/>
            <person name="Fung E."/>
            <person name="Roncaglia P."/>
            <person name="Rowley D."/>
            <person name="Amedeo P."/>
            <person name="Bruno D."/>
            <person name="Vamathevan J."/>
            <person name="Miranda M."/>
            <person name="Anderson I.J."/>
            <person name="Fraser J.A."/>
            <person name="Allen J.E."/>
            <person name="Bosdet I.E."/>
            <person name="Brent M.R."/>
            <person name="Chiu R."/>
            <person name="Doering T.L."/>
            <person name="Donlin M.J."/>
            <person name="D'Souza C.A."/>
            <person name="Fox D.S."/>
            <person name="Grinberg V."/>
            <person name="Fu J."/>
            <person name="Fukushima M."/>
            <person name="Haas B.J."/>
            <person name="Huang J.C."/>
            <person name="Janbon G."/>
            <person name="Jones S.J.M."/>
            <person name="Koo H.L."/>
            <person name="Krzywinski M.I."/>
            <person name="Kwon-Chung K.J."/>
            <person name="Lengeler K.B."/>
            <person name="Maiti R."/>
            <person name="Marra M.A."/>
            <person name="Marra R.E."/>
            <person name="Mathewson C.A."/>
            <person name="Mitchell T.G."/>
            <person name="Pertea M."/>
            <person name="Riggs F.R."/>
            <person name="Salzberg S.L."/>
            <person name="Schein J.E."/>
            <person name="Shvartsbeyn A."/>
            <person name="Shin H."/>
            <person name="Shumway M."/>
            <person name="Specht C.A."/>
            <person name="Suh B.B."/>
            <person name="Tenney A."/>
            <person name="Utterback T.R."/>
            <person name="Wickes B.L."/>
            <person name="Wortman J.R."/>
            <person name="Wye N.H."/>
            <person name="Kronstad J.W."/>
            <person name="Lodge J.K."/>
            <person name="Heitman J."/>
            <person name="Davis R.W."/>
            <person name="Fraser C.M."/>
            <person name="Hyman R.W."/>
        </authorList>
    </citation>
    <scope>NUCLEOTIDE SEQUENCE [LARGE SCALE GENOMIC DNA]</scope>
    <source>
        <strain>JEC21 / ATCC MYA-565</strain>
    </source>
</reference>
<dbReference type="EC" id="1.14.99.29" evidence="1"/>
<dbReference type="EMBL" id="AE017352">
    <property type="protein sequence ID" value="AAW46555.1"/>
    <property type="molecule type" value="Genomic_DNA"/>
</dbReference>
<dbReference type="RefSeq" id="XP_568072.1">
    <property type="nucleotide sequence ID" value="XM_568072.1"/>
</dbReference>
<dbReference type="SMR" id="P0CN10"/>
<dbReference type="FunCoup" id="P0CN10">
    <property type="interactions" value="357"/>
</dbReference>
<dbReference type="STRING" id="214684.P0CN10"/>
<dbReference type="PaxDb" id="214684-P0CN10"/>
<dbReference type="EnsemblFungi" id="AAW46555">
    <property type="protein sequence ID" value="AAW46555"/>
    <property type="gene ID" value="CNL05340"/>
</dbReference>
<dbReference type="GeneID" id="3254797"/>
<dbReference type="KEGG" id="cne:CNL05340"/>
<dbReference type="VEuPathDB" id="FungiDB:CNL05340"/>
<dbReference type="eggNOG" id="KOG0567">
    <property type="taxonomic scope" value="Eukaryota"/>
</dbReference>
<dbReference type="HOGENOM" id="CLU_053974_0_0_1"/>
<dbReference type="InParanoid" id="P0CN10"/>
<dbReference type="OMA" id="LQEPCSI"/>
<dbReference type="OrthoDB" id="421002at2759"/>
<dbReference type="UniPathway" id="UPA00354"/>
<dbReference type="Proteomes" id="UP000002149">
    <property type="component" value="Chromosome 12"/>
</dbReference>
<dbReference type="GO" id="GO:0005737">
    <property type="term" value="C:cytoplasm"/>
    <property type="evidence" value="ECO:0007669"/>
    <property type="project" value="UniProtKB-SubCell"/>
</dbReference>
<dbReference type="GO" id="GO:0005634">
    <property type="term" value="C:nucleus"/>
    <property type="evidence" value="ECO:0007669"/>
    <property type="project" value="UniProtKB-SubCell"/>
</dbReference>
<dbReference type="GO" id="GO:0019135">
    <property type="term" value="F:deoxyhypusine monooxygenase activity"/>
    <property type="evidence" value="ECO:0000318"/>
    <property type="project" value="GO_Central"/>
</dbReference>
<dbReference type="GO" id="GO:0046872">
    <property type="term" value="F:metal ion binding"/>
    <property type="evidence" value="ECO:0007669"/>
    <property type="project" value="UniProtKB-KW"/>
</dbReference>
<dbReference type="Gene3D" id="1.25.10.10">
    <property type="entry name" value="Leucine-rich Repeat Variant"/>
    <property type="match status" value="2"/>
</dbReference>
<dbReference type="HAMAP" id="MF_03101">
    <property type="entry name" value="Deoxyhypusine_hydroxylase"/>
    <property type="match status" value="1"/>
</dbReference>
<dbReference type="InterPro" id="IPR011989">
    <property type="entry name" value="ARM-like"/>
</dbReference>
<dbReference type="InterPro" id="IPR016024">
    <property type="entry name" value="ARM-type_fold"/>
</dbReference>
<dbReference type="InterPro" id="IPR027517">
    <property type="entry name" value="Deoxyhypusine_hydroxylase"/>
</dbReference>
<dbReference type="InterPro" id="IPR004155">
    <property type="entry name" value="PBS_lyase_HEAT"/>
</dbReference>
<dbReference type="PANTHER" id="PTHR12697:SF5">
    <property type="entry name" value="DEOXYHYPUSINE HYDROXYLASE"/>
    <property type="match status" value="1"/>
</dbReference>
<dbReference type="PANTHER" id="PTHR12697">
    <property type="entry name" value="PBS LYASE HEAT-LIKE PROTEIN"/>
    <property type="match status" value="1"/>
</dbReference>
<dbReference type="Pfam" id="PF13646">
    <property type="entry name" value="HEAT_2"/>
    <property type="match status" value="2"/>
</dbReference>
<dbReference type="SMART" id="SM00567">
    <property type="entry name" value="EZ_HEAT"/>
    <property type="match status" value="6"/>
</dbReference>
<dbReference type="SUPFAM" id="SSF48371">
    <property type="entry name" value="ARM repeat"/>
    <property type="match status" value="1"/>
</dbReference>
<accession>P0CN10</accession>
<accession>Q55M65</accession>
<accession>Q5K8K5</accession>
<sequence>MSVQVSPEQMATLKATLLNTPGNVPLHERFRALFMLKAVGGDEVVDIVSEGLKDPSPLLKHELAYVLGQLLNTRALPTLSRVLENPTGEHCSMVRHEAAEALGAIGAEESLPILRKYMQDENREVRETCEIAVGKIEFDLSEEGKKTNANPDFPTIDPAPSAAPSDIPSLRADLLNTSLPLFQRYRAMFALRDFGAGSKEAVEALADGFRDGSALFRHEIAYIFGQLSSPYSIPSLLSRLRDAKEDDMVRHEAAEALGGIASDGVESENPEVVLPEDERLPEGGVLAVLREWAVKADAPTVVRESCQVAIDMWEYENSADQFNPLDSLSAKQEEREKTEKVNTTGMERSAHAAVAAMGIAA</sequence>
<name>DOHH_CRYNJ</name>
<feature type="chain" id="PRO_0000283662" description="Deoxyhypusine hydroxylase">
    <location>
        <begin position="1"/>
        <end position="361"/>
    </location>
</feature>
<feature type="repeat" description="HEAT-like PBS-type 1">
    <location>
        <begin position="59"/>
        <end position="85"/>
    </location>
</feature>
<feature type="repeat" description="HEAT-like PBS-type 2">
    <location>
        <begin position="94"/>
        <end position="120"/>
    </location>
</feature>
<feature type="repeat" description="HEAT-like PBS-type 3">
    <location>
        <begin position="183"/>
        <end position="211"/>
    </location>
</feature>
<feature type="repeat" description="HEAT-like PBS-type 4">
    <location>
        <begin position="216"/>
        <end position="242"/>
    </location>
</feature>
<feature type="binding site" evidence="1">
    <location>
        <position position="61"/>
    </location>
    <ligand>
        <name>Fe cation</name>
        <dbReference type="ChEBI" id="CHEBI:24875"/>
        <label>1</label>
    </ligand>
</feature>
<feature type="binding site" evidence="1">
    <location>
        <position position="62"/>
    </location>
    <ligand>
        <name>Fe cation</name>
        <dbReference type="ChEBI" id="CHEBI:24875"/>
        <label>1</label>
    </ligand>
</feature>
<feature type="binding site" evidence="1">
    <location>
        <position position="96"/>
    </location>
    <ligand>
        <name>Fe cation</name>
        <dbReference type="ChEBI" id="CHEBI:24875"/>
        <label>1</label>
    </ligand>
</feature>
<feature type="binding site" evidence="1">
    <location>
        <position position="97"/>
    </location>
    <ligand>
        <name>Fe cation</name>
        <dbReference type="ChEBI" id="CHEBI:24875"/>
        <label>1</label>
    </ligand>
</feature>
<feature type="binding site" evidence="1">
    <location>
        <position position="218"/>
    </location>
    <ligand>
        <name>Fe cation</name>
        <dbReference type="ChEBI" id="CHEBI:24875"/>
        <label>2</label>
    </ligand>
</feature>
<feature type="binding site" evidence="1">
    <location>
        <position position="219"/>
    </location>
    <ligand>
        <name>Fe cation</name>
        <dbReference type="ChEBI" id="CHEBI:24875"/>
        <label>2</label>
    </ligand>
</feature>
<feature type="binding site" evidence="1">
    <location>
        <position position="251"/>
    </location>
    <ligand>
        <name>Fe cation</name>
        <dbReference type="ChEBI" id="CHEBI:24875"/>
        <label>2</label>
    </ligand>
</feature>
<feature type="binding site" evidence="1">
    <location>
        <position position="252"/>
    </location>
    <ligand>
        <name>Fe cation</name>
        <dbReference type="ChEBI" id="CHEBI:24875"/>
        <label>2</label>
    </ligand>
</feature>
<keyword id="KW-0963">Cytoplasm</keyword>
<keyword id="KW-0386">Hypusine biosynthesis</keyword>
<keyword id="KW-0408">Iron</keyword>
<keyword id="KW-0479">Metal-binding</keyword>
<keyword id="KW-0503">Monooxygenase</keyword>
<keyword id="KW-0539">Nucleus</keyword>
<keyword id="KW-0560">Oxidoreductase</keyword>
<keyword id="KW-1185">Reference proteome</keyword>
<keyword id="KW-0677">Repeat</keyword>